<name>HSLO_CLOPE</name>
<comment type="function">
    <text evidence="1">Redox regulated molecular chaperone. Protects both thermally unfolding and oxidatively damaged proteins from irreversible aggregation. Plays an important role in the bacterial defense system toward oxidative stress.</text>
</comment>
<comment type="subcellular location">
    <subcellularLocation>
        <location evidence="1">Cytoplasm</location>
    </subcellularLocation>
</comment>
<comment type="PTM">
    <text evidence="1">Under oxidizing conditions two disulfide bonds are formed involving the reactive cysteines. Under reducing conditions zinc is bound to the reactive cysteines and the protein is inactive.</text>
</comment>
<comment type="similarity">
    <text evidence="1">Belongs to the HSP33 family.</text>
</comment>
<sequence length="319" mass="35063">MSDKLIRAIAKDGMIRIFATETTELVDEASKIHDCTPTAAAALGRMLTAGTMMGAMLKSDKEVVTLQINGGGMAKGVTVTAYSDCSVKGYIGNPHVDLPLNTENGKLNVGEAIGKNGGLTVIKDLGLKDPYVGQVPIYSGEIAEDLAYYFTASEQIPSAVALGVLVDRDHSIKKAGGFIIQLLPGADELLGDLLTYRLDEIPSLTTMLSEGKTIEEVIEFIFDGMDLKILEEETPKYKCDCSREKVERALLSIGYKDLKELYDEGKEEELKCHFCNKAYKFTKEDIGKLLEEKEKSIADEVSEEMKKAEEKEKEEKNKK</sequence>
<evidence type="ECO:0000255" key="1">
    <source>
        <dbReference type="HAMAP-Rule" id="MF_00117"/>
    </source>
</evidence>
<evidence type="ECO:0000256" key="2">
    <source>
        <dbReference type="SAM" id="MobiDB-lite"/>
    </source>
</evidence>
<proteinExistence type="inferred from homology"/>
<organism>
    <name type="scientific">Clostridium perfringens (strain 13 / Type A)</name>
    <dbReference type="NCBI Taxonomy" id="195102"/>
    <lineage>
        <taxon>Bacteria</taxon>
        <taxon>Bacillati</taxon>
        <taxon>Bacillota</taxon>
        <taxon>Clostridia</taxon>
        <taxon>Eubacteriales</taxon>
        <taxon>Clostridiaceae</taxon>
        <taxon>Clostridium</taxon>
    </lineage>
</organism>
<dbReference type="EMBL" id="BA000016">
    <property type="protein sequence ID" value="BAB81607.1"/>
    <property type="molecule type" value="Genomic_DNA"/>
</dbReference>
<dbReference type="RefSeq" id="WP_003454848.1">
    <property type="nucleotide sequence ID" value="NC_003366.1"/>
</dbReference>
<dbReference type="SMR" id="Q8XJ60"/>
<dbReference type="STRING" id="195102.gene:10491170"/>
<dbReference type="GeneID" id="93001562"/>
<dbReference type="KEGG" id="cpe:CPE1901"/>
<dbReference type="HOGENOM" id="CLU_054493_1_0_9"/>
<dbReference type="Proteomes" id="UP000000818">
    <property type="component" value="Chromosome"/>
</dbReference>
<dbReference type="GO" id="GO:0005737">
    <property type="term" value="C:cytoplasm"/>
    <property type="evidence" value="ECO:0007669"/>
    <property type="project" value="UniProtKB-SubCell"/>
</dbReference>
<dbReference type="GO" id="GO:0044183">
    <property type="term" value="F:protein folding chaperone"/>
    <property type="evidence" value="ECO:0007669"/>
    <property type="project" value="TreeGrafter"/>
</dbReference>
<dbReference type="GO" id="GO:0051082">
    <property type="term" value="F:unfolded protein binding"/>
    <property type="evidence" value="ECO:0007669"/>
    <property type="project" value="UniProtKB-UniRule"/>
</dbReference>
<dbReference type="GO" id="GO:0042026">
    <property type="term" value="P:protein refolding"/>
    <property type="evidence" value="ECO:0007669"/>
    <property type="project" value="TreeGrafter"/>
</dbReference>
<dbReference type="CDD" id="cd00498">
    <property type="entry name" value="Hsp33"/>
    <property type="match status" value="1"/>
</dbReference>
<dbReference type="Gene3D" id="3.55.30.10">
    <property type="entry name" value="Hsp33 domain"/>
    <property type="match status" value="1"/>
</dbReference>
<dbReference type="Gene3D" id="3.90.1280.10">
    <property type="entry name" value="HSP33 redox switch-like"/>
    <property type="match status" value="1"/>
</dbReference>
<dbReference type="HAMAP" id="MF_00117">
    <property type="entry name" value="HslO"/>
    <property type="match status" value="1"/>
</dbReference>
<dbReference type="InterPro" id="IPR000397">
    <property type="entry name" value="Heat_shock_Hsp33"/>
</dbReference>
<dbReference type="InterPro" id="IPR016154">
    <property type="entry name" value="Heat_shock_Hsp33_C"/>
</dbReference>
<dbReference type="InterPro" id="IPR016153">
    <property type="entry name" value="Heat_shock_Hsp33_N"/>
</dbReference>
<dbReference type="NCBIfam" id="NF001033">
    <property type="entry name" value="PRK00114.1"/>
    <property type="match status" value="1"/>
</dbReference>
<dbReference type="PANTHER" id="PTHR30111">
    <property type="entry name" value="33 KDA CHAPERONIN"/>
    <property type="match status" value="1"/>
</dbReference>
<dbReference type="PANTHER" id="PTHR30111:SF1">
    <property type="entry name" value="33 KDA CHAPERONIN"/>
    <property type="match status" value="1"/>
</dbReference>
<dbReference type="Pfam" id="PF01430">
    <property type="entry name" value="HSP33"/>
    <property type="match status" value="1"/>
</dbReference>
<dbReference type="PIRSF" id="PIRSF005261">
    <property type="entry name" value="Heat_shock_Hsp33"/>
    <property type="match status" value="1"/>
</dbReference>
<dbReference type="SUPFAM" id="SSF64397">
    <property type="entry name" value="Hsp33 domain"/>
    <property type="match status" value="1"/>
</dbReference>
<dbReference type="SUPFAM" id="SSF118352">
    <property type="entry name" value="HSP33 redox switch-like"/>
    <property type="match status" value="1"/>
</dbReference>
<keyword id="KW-0143">Chaperone</keyword>
<keyword id="KW-0963">Cytoplasm</keyword>
<keyword id="KW-1015">Disulfide bond</keyword>
<keyword id="KW-0676">Redox-active center</keyword>
<keyword id="KW-1185">Reference proteome</keyword>
<keyword id="KW-0862">Zinc</keyword>
<accession>Q8XJ60</accession>
<gene>
    <name evidence="1" type="primary">hslO</name>
    <name type="ordered locus">CPE1901</name>
</gene>
<reference key="1">
    <citation type="journal article" date="2002" name="Proc. Natl. Acad. Sci. U.S.A.">
        <title>Complete genome sequence of Clostridium perfringens, an anaerobic flesh-eater.</title>
        <authorList>
            <person name="Shimizu T."/>
            <person name="Ohtani K."/>
            <person name="Hirakawa H."/>
            <person name="Ohshima K."/>
            <person name="Yamashita A."/>
            <person name="Shiba T."/>
            <person name="Ogasawara N."/>
            <person name="Hattori M."/>
            <person name="Kuhara S."/>
            <person name="Hayashi H."/>
        </authorList>
    </citation>
    <scope>NUCLEOTIDE SEQUENCE [LARGE SCALE GENOMIC DNA]</scope>
    <source>
        <strain>13 / Type A</strain>
    </source>
</reference>
<feature type="chain" id="PRO_0000192171" description="33 kDa chaperonin">
    <location>
        <begin position="1"/>
        <end position="319"/>
    </location>
</feature>
<feature type="region of interest" description="Disordered" evidence="2">
    <location>
        <begin position="300"/>
        <end position="319"/>
    </location>
</feature>
<feature type="disulfide bond" description="Redox-active" evidence="1">
    <location>
        <begin position="239"/>
        <end position="241"/>
    </location>
</feature>
<feature type="disulfide bond" description="Redox-active" evidence="1">
    <location>
        <begin position="272"/>
        <end position="275"/>
    </location>
</feature>
<protein>
    <recommendedName>
        <fullName evidence="1">33 kDa chaperonin</fullName>
    </recommendedName>
    <alternativeName>
        <fullName evidence="1">Heat shock protein 33 homolog</fullName>
        <shortName evidence="1">HSP33</shortName>
    </alternativeName>
</protein>